<protein>
    <recommendedName>
        <fullName evidence="1">Exodeoxyribonuclease 7 large subunit</fullName>
        <ecNumber evidence="1">3.1.11.6</ecNumber>
    </recommendedName>
    <alternativeName>
        <fullName evidence="1">Exodeoxyribonuclease VII large subunit</fullName>
        <shortName evidence="1">Exonuclease VII large subunit</shortName>
    </alternativeName>
</protein>
<organism>
    <name type="scientific">Bacillus anthracis</name>
    <dbReference type="NCBI Taxonomy" id="1392"/>
    <lineage>
        <taxon>Bacteria</taxon>
        <taxon>Bacillati</taxon>
        <taxon>Bacillota</taxon>
        <taxon>Bacilli</taxon>
        <taxon>Bacillales</taxon>
        <taxon>Bacillaceae</taxon>
        <taxon>Bacillus</taxon>
        <taxon>Bacillus cereus group</taxon>
    </lineage>
</organism>
<dbReference type="EC" id="3.1.11.6" evidence="1"/>
<dbReference type="EMBL" id="AE016879">
    <property type="protein sequence ID" value="AAP28118.1"/>
    <property type="molecule type" value="Genomic_DNA"/>
</dbReference>
<dbReference type="EMBL" id="AE017225">
    <property type="protein sequence ID" value="AAT56385.1"/>
    <property type="molecule type" value="Genomic_DNA"/>
</dbReference>
<dbReference type="EMBL" id="AE017334">
    <property type="protein sequence ID" value="AAT33522.1"/>
    <property type="molecule type" value="Genomic_DNA"/>
</dbReference>
<dbReference type="RefSeq" id="NP_846632.1">
    <property type="nucleotide sequence ID" value="NC_003997.3"/>
</dbReference>
<dbReference type="RefSeq" id="WP_000415259.1">
    <property type="nucleotide sequence ID" value="NZ_WXXJ01000027.1"/>
</dbReference>
<dbReference type="RefSeq" id="YP_030334.1">
    <property type="nucleotide sequence ID" value="NC_005945.1"/>
</dbReference>
<dbReference type="SMR" id="Q81M51"/>
<dbReference type="IntAct" id="Q81M51">
    <property type="interactions" value="3"/>
</dbReference>
<dbReference type="STRING" id="261594.GBAA_4404"/>
<dbReference type="DNASU" id="1087732"/>
<dbReference type="GeneID" id="45024063"/>
<dbReference type="KEGG" id="ban:BA_4404"/>
<dbReference type="KEGG" id="banh:HYU01_21490"/>
<dbReference type="KEGG" id="bar:GBAA_4404"/>
<dbReference type="KEGG" id="bat:BAS4084"/>
<dbReference type="PATRIC" id="fig|198094.11.peg.4372"/>
<dbReference type="eggNOG" id="COG1570">
    <property type="taxonomic scope" value="Bacteria"/>
</dbReference>
<dbReference type="HOGENOM" id="CLU_023625_3_1_9"/>
<dbReference type="OMA" id="WPAVRFE"/>
<dbReference type="OrthoDB" id="9802795at2"/>
<dbReference type="Proteomes" id="UP000000427">
    <property type="component" value="Chromosome"/>
</dbReference>
<dbReference type="Proteomes" id="UP000000594">
    <property type="component" value="Chromosome"/>
</dbReference>
<dbReference type="GO" id="GO:0005737">
    <property type="term" value="C:cytoplasm"/>
    <property type="evidence" value="ECO:0007669"/>
    <property type="project" value="UniProtKB-SubCell"/>
</dbReference>
<dbReference type="GO" id="GO:0009318">
    <property type="term" value="C:exodeoxyribonuclease VII complex"/>
    <property type="evidence" value="ECO:0007669"/>
    <property type="project" value="InterPro"/>
</dbReference>
<dbReference type="GO" id="GO:0008855">
    <property type="term" value="F:exodeoxyribonuclease VII activity"/>
    <property type="evidence" value="ECO:0007669"/>
    <property type="project" value="UniProtKB-UniRule"/>
</dbReference>
<dbReference type="GO" id="GO:0003676">
    <property type="term" value="F:nucleic acid binding"/>
    <property type="evidence" value="ECO:0007669"/>
    <property type="project" value="InterPro"/>
</dbReference>
<dbReference type="GO" id="GO:0006308">
    <property type="term" value="P:DNA catabolic process"/>
    <property type="evidence" value="ECO:0007669"/>
    <property type="project" value="UniProtKB-UniRule"/>
</dbReference>
<dbReference type="CDD" id="cd04489">
    <property type="entry name" value="ExoVII_LU_OBF"/>
    <property type="match status" value="1"/>
</dbReference>
<dbReference type="HAMAP" id="MF_00378">
    <property type="entry name" value="Exonuc_7_L"/>
    <property type="match status" value="1"/>
</dbReference>
<dbReference type="InterPro" id="IPR003753">
    <property type="entry name" value="Exonuc_VII_L"/>
</dbReference>
<dbReference type="InterPro" id="IPR020579">
    <property type="entry name" value="Exonuc_VII_lsu_C"/>
</dbReference>
<dbReference type="InterPro" id="IPR025824">
    <property type="entry name" value="OB-fold_nuc-bd_dom"/>
</dbReference>
<dbReference type="NCBIfam" id="TIGR00237">
    <property type="entry name" value="xseA"/>
    <property type="match status" value="1"/>
</dbReference>
<dbReference type="PANTHER" id="PTHR30008">
    <property type="entry name" value="EXODEOXYRIBONUCLEASE 7 LARGE SUBUNIT"/>
    <property type="match status" value="1"/>
</dbReference>
<dbReference type="PANTHER" id="PTHR30008:SF0">
    <property type="entry name" value="EXODEOXYRIBONUCLEASE 7 LARGE SUBUNIT"/>
    <property type="match status" value="1"/>
</dbReference>
<dbReference type="Pfam" id="PF02601">
    <property type="entry name" value="Exonuc_VII_L"/>
    <property type="match status" value="1"/>
</dbReference>
<dbReference type="Pfam" id="PF13742">
    <property type="entry name" value="tRNA_anti_2"/>
    <property type="match status" value="1"/>
</dbReference>
<gene>
    <name evidence="1" type="primary">xseA</name>
    <name type="ordered locus">BA_4404</name>
    <name type="ordered locus">GBAA_4404</name>
    <name type="ordered locus">BAS4084</name>
</gene>
<proteinExistence type="inferred from homology"/>
<name>EX7L_BACAN</name>
<feature type="chain" id="PRO_0000273639" description="Exodeoxyribonuclease 7 large subunit">
    <location>
        <begin position="1"/>
        <end position="452"/>
    </location>
</feature>
<comment type="function">
    <text evidence="1">Bidirectionally degrades single-stranded DNA into large acid-insoluble oligonucleotides, which are then degraded further into small acid-soluble oligonucleotides.</text>
</comment>
<comment type="catalytic activity">
    <reaction evidence="1">
        <text>Exonucleolytic cleavage in either 5'- to 3'- or 3'- to 5'-direction to yield nucleoside 5'-phosphates.</text>
        <dbReference type="EC" id="3.1.11.6"/>
    </reaction>
</comment>
<comment type="subunit">
    <text evidence="1">Heterooligomer composed of large and small subunits.</text>
</comment>
<comment type="subcellular location">
    <subcellularLocation>
        <location evidence="1">Cytoplasm</location>
    </subcellularLocation>
</comment>
<comment type="similarity">
    <text evidence="1">Belongs to the XseA family.</text>
</comment>
<reference key="1">
    <citation type="journal article" date="2003" name="Nature">
        <title>The genome sequence of Bacillus anthracis Ames and comparison to closely related bacteria.</title>
        <authorList>
            <person name="Read T.D."/>
            <person name="Peterson S.N."/>
            <person name="Tourasse N.J."/>
            <person name="Baillie L.W."/>
            <person name="Paulsen I.T."/>
            <person name="Nelson K.E."/>
            <person name="Tettelin H."/>
            <person name="Fouts D.E."/>
            <person name="Eisen J.A."/>
            <person name="Gill S.R."/>
            <person name="Holtzapple E.K."/>
            <person name="Okstad O.A."/>
            <person name="Helgason E."/>
            <person name="Rilstone J."/>
            <person name="Wu M."/>
            <person name="Kolonay J.F."/>
            <person name="Beanan M.J."/>
            <person name="Dodson R.J."/>
            <person name="Brinkac L.M."/>
            <person name="Gwinn M.L."/>
            <person name="DeBoy R.T."/>
            <person name="Madpu R."/>
            <person name="Daugherty S.C."/>
            <person name="Durkin A.S."/>
            <person name="Haft D.H."/>
            <person name="Nelson W.C."/>
            <person name="Peterson J.D."/>
            <person name="Pop M."/>
            <person name="Khouri H.M."/>
            <person name="Radune D."/>
            <person name="Benton J.L."/>
            <person name="Mahamoud Y."/>
            <person name="Jiang L."/>
            <person name="Hance I.R."/>
            <person name="Weidman J.F."/>
            <person name="Berry K.J."/>
            <person name="Plaut R.D."/>
            <person name="Wolf A.M."/>
            <person name="Watkins K.L."/>
            <person name="Nierman W.C."/>
            <person name="Hazen A."/>
            <person name="Cline R.T."/>
            <person name="Redmond C."/>
            <person name="Thwaite J.E."/>
            <person name="White O."/>
            <person name="Salzberg S.L."/>
            <person name="Thomason B."/>
            <person name="Friedlander A.M."/>
            <person name="Koehler T.M."/>
            <person name="Hanna P.C."/>
            <person name="Kolstoe A.-B."/>
            <person name="Fraser C.M."/>
        </authorList>
    </citation>
    <scope>NUCLEOTIDE SEQUENCE [LARGE SCALE GENOMIC DNA]</scope>
    <source>
        <strain>Ames / isolate Porton</strain>
    </source>
</reference>
<reference key="2">
    <citation type="submission" date="2004-01" db="EMBL/GenBank/DDBJ databases">
        <title>Complete genome sequence of Bacillus anthracis Sterne.</title>
        <authorList>
            <person name="Brettin T.S."/>
            <person name="Bruce D."/>
            <person name="Challacombe J.F."/>
            <person name="Gilna P."/>
            <person name="Han C."/>
            <person name="Hill K."/>
            <person name="Hitchcock P."/>
            <person name="Jackson P."/>
            <person name="Keim P."/>
            <person name="Longmire J."/>
            <person name="Lucas S."/>
            <person name="Okinaka R."/>
            <person name="Richardson P."/>
            <person name="Rubin E."/>
            <person name="Tice H."/>
        </authorList>
    </citation>
    <scope>NUCLEOTIDE SEQUENCE [LARGE SCALE GENOMIC DNA]</scope>
    <source>
        <strain>Sterne</strain>
    </source>
</reference>
<reference key="3">
    <citation type="journal article" date="2009" name="J. Bacteriol.">
        <title>The complete genome sequence of Bacillus anthracis Ames 'Ancestor'.</title>
        <authorList>
            <person name="Ravel J."/>
            <person name="Jiang L."/>
            <person name="Stanley S.T."/>
            <person name="Wilson M.R."/>
            <person name="Decker R.S."/>
            <person name="Read T.D."/>
            <person name="Worsham P."/>
            <person name="Keim P.S."/>
            <person name="Salzberg S.L."/>
            <person name="Fraser-Liggett C.M."/>
            <person name="Rasko D.A."/>
        </authorList>
    </citation>
    <scope>NUCLEOTIDE SEQUENCE [LARGE SCALE GENOMIC DNA]</scope>
    <source>
        <strain>Ames ancestor</strain>
    </source>
</reference>
<accession>Q81M51</accession>
<accession>Q6HTK4</accession>
<accession>Q6KMU4</accession>
<evidence type="ECO:0000255" key="1">
    <source>
        <dbReference type="HAMAP-Rule" id="MF_00378"/>
    </source>
</evidence>
<sequence length="452" mass="51424">MEKQYLTVTALTRYIKTKIEYDPHLQSVWLKGEISNFKNHSRGHMYFTLKDENARIAAVMFAGHNRNIKFRPENGMKVLVKGKISVYEASGSYQIYIQDMQPDGIGNLHLAYEQLKVRLEEEGLFSQVYKKTIPPYAKTIGVITSPTGAAIRDIITTIKRRYPIGNVIVFPVLVQGESAAPSIVQAIRTANEMEEIDVLIVGRGGGSIEELWAFNEEMVARAIFKSEIPIISAVGHETDFTIADFVADLRAPTPTAAAELAAPNIIELQEKVLQRTLRLQRAMRELVHKKEEKLQVLQKSYAFRYPRQVYEQKEEQLDRALEQLVLAKERYIDKKVNQLKQLSFYLEKHHPSQKIMQTKVAVETLQKQLQREMQTLLQAKEFAFVRAAQKLEALSPLKVMMRGYGLVYDEEKQVLKSVKDVSLGDAVSVQLQDGILDCSVSGIEERELNNGK</sequence>
<keyword id="KW-0963">Cytoplasm</keyword>
<keyword id="KW-0269">Exonuclease</keyword>
<keyword id="KW-0378">Hydrolase</keyword>
<keyword id="KW-0540">Nuclease</keyword>
<keyword id="KW-1185">Reference proteome</keyword>